<name>NPB_BOVIN</name>
<evidence type="ECO:0000250" key="1"/>
<evidence type="ECO:0000255" key="2"/>
<evidence type="ECO:0000269" key="3">
    <source>
    </source>
</evidence>
<evidence type="ECO:0000269" key="4">
    <source>
    </source>
</evidence>
<evidence type="ECO:0000305" key="5"/>
<keyword id="KW-0102">Bromination</keyword>
<keyword id="KW-0165">Cleavage on pair of basic residues</keyword>
<keyword id="KW-0903">Direct protein sequencing</keyword>
<keyword id="KW-0527">Neuropeptide</keyword>
<keyword id="KW-1185">Reference proteome</keyword>
<keyword id="KW-0964">Secreted</keyword>
<keyword id="KW-0732">Signal</keyword>
<dbReference type="EMBL" id="AB085943">
    <property type="protein sequence ID" value="BAC07176.1"/>
    <property type="molecule type" value="mRNA"/>
</dbReference>
<dbReference type="RefSeq" id="NP_776369.1">
    <property type="nucleotide sequence ID" value="NM_173944.1"/>
</dbReference>
<dbReference type="FunCoup" id="Q8MJV4">
    <property type="interactions" value="65"/>
</dbReference>
<dbReference type="STRING" id="9913.ENSBTAP00000018455"/>
<dbReference type="PaxDb" id="9913-ENSBTAP00000018455"/>
<dbReference type="Ensembl" id="ENSBTAT00000018455.5">
    <property type="protein sequence ID" value="ENSBTAP00000018455.3"/>
    <property type="gene ID" value="ENSBTAG00000013898.5"/>
</dbReference>
<dbReference type="GeneID" id="280880"/>
<dbReference type="KEGG" id="bta:280880"/>
<dbReference type="CTD" id="256933"/>
<dbReference type="VEuPathDB" id="HostDB:ENSBTAG00000013898"/>
<dbReference type="VGNC" id="VGNC:32192">
    <property type="gene designation" value="NPB"/>
</dbReference>
<dbReference type="eggNOG" id="ENOG502S25S">
    <property type="taxonomic scope" value="Eukaryota"/>
</dbReference>
<dbReference type="GeneTree" id="ENSGT00940000158204"/>
<dbReference type="HOGENOM" id="CLU_1991876_0_0_1"/>
<dbReference type="InParanoid" id="Q8MJV4"/>
<dbReference type="OMA" id="ATFQCRA"/>
<dbReference type="OrthoDB" id="9942334at2759"/>
<dbReference type="TreeFam" id="TF333179"/>
<dbReference type="Reactome" id="R-BTA-375276">
    <property type="pathway name" value="Peptide ligand-binding receptors"/>
</dbReference>
<dbReference type="Reactome" id="R-BTA-418594">
    <property type="pathway name" value="G alpha (i) signalling events"/>
</dbReference>
<dbReference type="Proteomes" id="UP000009136">
    <property type="component" value="Chromosome 19"/>
</dbReference>
<dbReference type="Bgee" id="ENSBTAG00000013898">
    <property type="expression patterns" value="Expressed in floor plate of diencephalon and 45 other cell types or tissues"/>
</dbReference>
<dbReference type="GO" id="GO:0005576">
    <property type="term" value="C:extracellular region"/>
    <property type="evidence" value="ECO:0007669"/>
    <property type="project" value="UniProtKB-SubCell"/>
</dbReference>
<dbReference type="GO" id="GO:0001664">
    <property type="term" value="F:G protein-coupled receptor binding"/>
    <property type="evidence" value="ECO:0000318"/>
    <property type="project" value="GO_Central"/>
</dbReference>
<dbReference type="GO" id="GO:0007631">
    <property type="term" value="P:feeding behavior"/>
    <property type="evidence" value="ECO:0000318"/>
    <property type="project" value="GO_Central"/>
</dbReference>
<dbReference type="GO" id="GO:0007186">
    <property type="term" value="P:G protein-coupled receptor signaling pathway"/>
    <property type="evidence" value="ECO:0000318"/>
    <property type="project" value="GO_Central"/>
</dbReference>
<dbReference type="GO" id="GO:0007218">
    <property type="term" value="P:neuropeptide signaling pathway"/>
    <property type="evidence" value="ECO:0007669"/>
    <property type="project" value="UniProtKB-KW"/>
</dbReference>
<dbReference type="InterPro" id="IPR013298">
    <property type="entry name" value="Neuropept_B_pre"/>
</dbReference>
<dbReference type="InterPro" id="IPR013297">
    <property type="entry name" value="Neuropept_BW_pre"/>
</dbReference>
<dbReference type="PANTHER" id="PTHR28553">
    <property type="entry name" value="NEUROPEPTIDE B"/>
    <property type="match status" value="1"/>
</dbReference>
<dbReference type="PANTHER" id="PTHR28553:SF1">
    <property type="entry name" value="NEUROPEPTIDE B"/>
    <property type="match status" value="1"/>
</dbReference>
<dbReference type="Pfam" id="PF15180">
    <property type="entry name" value="NPBW"/>
    <property type="match status" value="1"/>
</dbReference>
<dbReference type="PRINTS" id="PR01888">
    <property type="entry name" value="NROPEPTIDEBW"/>
</dbReference>
<dbReference type="PRINTS" id="PR01889">
    <property type="entry name" value="PPNRPEPTIDEB"/>
</dbReference>
<reference key="1">
    <citation type="journal article" date="2002" name="J. Biol. Chem.">
        <title>Identification of a neuropeptide modified with bromine as an endogenous ligand for GPR7.</title>
        <authorList>
            <person name="Fujii R."/>
            <person name="Yoshida H."/>
            <person name="Fukusumi S."/>
            <person name="Habata Y."/>
            <person name="Hosoya M."/>
            <person name="Kawamata Y."/>
            <person name="Yano T."/>
            <person name="Hinuma S."/>
            <person name="Kitada C."/>
            <person name="Asami T."/>
            <person name="Mori M."/>
            <person name="Fujisawa Y."/>
            <person name="Fujino M."/>
        </authorList>
    </citation>
    <scope>NUCLEOTIDE SEQUENCE [MRNA]</scope>
    <scope>PROTEIN SEQUENCE OF 25-49</scope>
    <scope>BROMINATION AT TRP-25</scope>
</reference>
<reference key="2">
    <citation type="journal article" date="2003" name="Proc. Natl. Acad. Sci. U.S.A.">
        <title>Characterization of a family of endogenous neuropeptide ligands for the G protein-coupled receptors GPR7 and GPR8.</title>
        <authorList>
            <person name="Tanaka H."/>
            <person name="Yoshida T."/>
            <person name="Miyamoto N."/>
            <person name="Motoike T."/>
            <person name="Kurosu H."/>
            <person name="Shibata K."/>
            <person name="Yamanaka A."/>
            <person name="Williams S.C."/>
            <person name="Richardson J.A."/>
            <person name="Tsujino N."/>
            <person name="Garry M.G."/>
            <person name="Lerner M.R."/>
            <person name="King D.S."/>
            <person name="O'Dowd B.F."/>
            <person name="Sakurai T."/>
            <person name="Yanagisawa M."/>
        </authorList>
    </citation>
    <scope>CHARACTERIZATION</scope>
    <scope>BROMINATION AT TRP-25</scope>
</reference>
<comment type="function">
    <text evidence="1">May be involved in the regulation of feeding, neuroendocrine system, memory, learning and in the afferent pain pathway.</text>
</comment>
<comment type="subcellular location">
    <subcellularLocation>
        <location>Secreted</location>
    </subcellularLocation>
</comment>
<comment type="similarity">
    <text evidence="5">Belongs to the neuropeptide B/W family.</text>
</comment>
<feature type="signal peptide" evidence="3">
    <location>
        <begin position="1"/>
        <end position="24"/>
    </location>
</feature>
<feature type="peptide" id="PRO_0000019834" description="Neuropeptide B-29">
    <location>
        <begin position="25"/>
        <end position="53"/>
    </location>
</feature>
<feature type="propeptide" id="PRO_0000019835" evidence="2">
    <location>
        <begin position="56"/>
        <end position="122"/>
    </location>
</feature>
<feature type="modified residue" description="6'-bromotryptophan" evidence="3 4">
    <location>
        <position position="25"/>
    </location>
</feature>
<gene>
    <name type="primary">NPB</name>
</gene>
<protein>
    <recommendedName>
        <fullName>Neuropeptide B</fullName>
    </recommendedName>
    <alternativeName>
        <fullName>Preproprotein L7</fullName>
    </alternativeName>
    <alternativeName>
        <fullName>bPPL7</fullName>
    </alternativeName>
    <component>
        <recommendedName>
            <fullName>Neuropeptide B-29</fullName>
            <shortName>NPB29</shortName>
        </recommendedName>
        <alternativeName>
            <fullName>L7C</fullName>
        </alternativeName>
    </component>
</protein>
<accession>Q8MJV4</accession>
<sequence>MAGPAMLVAAALALCLLLASPGLAWYKPTAGQGYYSVGRAAGLLSGFHRSPYARRSEPRGGTRSLGGVGTFREMRPNLRSLAVCVEEVTPNLQSCEPLPDGRATFQCKADVFLSLSASDCRK</sequence>
<proteinExistence type="evidence at protein level"/>
<organism>
    <name type="scientific">Bos taurus</name>
    <name type="common">Bovine</name>
    <dbReference type="NCBI Taxonomy" id="9913"/>
    <lineage>
        <taxon>Eukaryota</taxon>
        <taxon>Metazoa</taxon>
        <taxon>Chordata</taxon>
        <taxon>Craniata</taxon>
        <taxon>Vertebrata</taxon>
        <taxon>Euteleostomi</taxon>
        <taxon>Mammalia</taxon>
        <taxon>Eutheria</taxon>
        <taxon>Laurasiatheria</taxon>
        <taxon>Artiodactyla</taxon>
        <taxon>Ruminantia</taxon>
        <taxon>Pecora</taxon>
        <taxon>Bovidae</taxon>
        <taxon>Bovinae</taxon>
        <taxon>Bos</taxon>
    </lineage>
</organism>